<reference key="1">
    <citation type="journal article" date="2005" name="Nature">
        <title>The map-based sequence of the rice genome.</title>
        <authorList>
            <consortium name="International rice genome sequencing project (IRGSP)"/>
        </authorList>
    </citation>
    <scope>NUCLEOTIDE SEQUENCE [LARGE SCALE GENOMIC DNA]</scope>
    <source>
        <strain>cv. Nipponbare</strain>
    </source>
</reference>
<reference key="2">
    <citation type="journal article" date="2008" name="Nucleic Acids Res.">
        <title>The rice annotation project database (RAP-DB): 2008 update.</title>
        <authorList>
            <consortium name="The rice annotation project (RAP)"/>
        </authorList>
    </citation>
    <scope>GENOME REANNOTATION</scope>
    <source>
        <strain>cv. Nipponbare</strain>
    </source>
</reference>
<reference key="3">
    <citation type="journal article" date="2013" name="Rice">
        <title>Improvement of the Oryza sativa Nipponbare reference genome using next generation sequence and optical map data.</title>
        <authorList>
            <person name="Kawahara Y."/>
            <person name="de la Bastide M."/>
            <person name="Hamilton J.P."/>
            <person name="Kanamori H."/>
            <person name="McCombie W.R."/>
            <person name="Ouyang S."/>
            <person name="Schwartz D.C."/>
            <person name="Tanaka T."/>
            <person name="Wu J."/>
            <person name="Zhou S."/>
            <person name="Childs K.L."/>
            <person name="Davidson R.M."/>
            <person name="Lin H."/>
            <person name="Quesada-Ocampo L."/>
            <person name="Vaillancourt B."/>
            <person name="Sakai H."/>
            <person name="Lee S.S."/>
            <person name="Kim J."/>
            <person name="Numa H."/>
            <person name="Itoh T."/>
            <person name="Buell C.R."/>
            <person name="Matsumoto T."/>
        </authorList>
    </citation>
    <scope>GENOME REANNOTATION</scope>
    <source>
        <strain>cv. Nipponbare</strain>
    </source>
</reference>
<reference key="4">
    <citation type="journal article" date="2003" name="Science">
        <title>Collection, mapping, and annotation of over 28,000 cDNA clones from japonica rice.</title>
        <authorList>
            <consortium name="The rice full-length cDNA consortium"/>
        </authorList>
    </citation>
    <scope>NUCLEOTIDE SEQUENCE [LARGE SCALE MRNA] OF 69-719</scope>
    <source>
        <strain>cv. Nipponbare</strain>
    </source>
</reference>
<reference key="5">
    <citation type="journal article" date="2013" name="Bioprocess Biosyst. Eng.">
        <title>Rice P450 reductases differentially affect P450-mediated metabolism in bacterial expression systems.</title>
        <authorList>
            <person name="Park S."/>
            <person name="Kim Y.S."/>
            <person name="Rupasinghe S.G."/>
            <person name="Schuler M.A."/>
            <person name="Back K."/>
        </authorList>
    </citation>
    <scope>FUNCTION</scope>
    <scope>CATALYTIC ACTIVITY</scope>
    <scope>SUBCELLULAR LOCATION</scope>
    <scope>INDUCTION</scope>
    <scope>BIOPHYSICOCHEMICAL PROPERTIES</scope>
</reference>
<dbReference type="EC" id="1.6.2.4" evidence="1 2"/>
<dbReference type="EMBL" id="AP004690">
    <property type="protein sequence ID" value="BAD05443.1"/>
    <property type="status" value="ALT_SEQ"/>
    <property type="molecule type" value="Genomic_DNA"/>
</dbReference>
<dbReference type="EMBL" id="AP005478">
    <property type="protein sequence ID" value="BAD05639.1"/>
    <property type="status" value="ALT_SEQ"/>
    <property type="molecule type" value="Genomic_DNA"/>
</dbReference>
<dbReference type="EMBL" id="AP008214">
    <property type="protein sequence ID" value="BAF23260.1"/>
    <property type="status" value="ALT_INIT"/>
    <property type="molecule type" value="Genomic_DNA"/>
</dbReference>
<dbReference type="EMBL" id="AP014964">
    <property type="protein sequence ID" value="BAT04511.1"/>
    <property type="status" value="ALT_INIT"/>
    <property type="molecule type" value="Genomic_DNA"/>
</dbReference>
<dbReference type="EMBL" id="AK099083">
    <property type="status" value="NOT_ANNOTATED_CDS"/>
    <property type="molecule type" value="mRNA"/>
</dbReference>
<dbReference type="SMR" id="Q0J705"/>
<dbReference type="FunCoup" id="Q0J705">
    <property type="interactions" value="3221"/>
</dbReference>
<dbReference type="STRING" id="39947.Q0J705"/>
<dbReference type="PaxDb" id="39947-Q0J705"/>
<dbReference type="KEGG" id="dosa:Os08g0243500"/>
<dbReference type="KEGG" id="osa:4345047"/>
<dbReference type="eggNOG" id="KOG1158">
    <property type="taxonomic scope" value="Eukaryota"/>
</dbReference>
<dbReference type="HOGENOM" id="CLU_001570_17_3_1"/>
<dbReference type="InParanoid" id="Q0J705"/>
<dbReference type="OrthoDB" id="1856718at2759"/>
<dbReference type="Proteomes" id="UP000000763">
    <property type="component" value="Chromosome 8"/>
</dbReference>
<dbReference type="Proteomes" id="UP000059680">
    <property type="component" value="Chromosome 8"/>
</dbReference>
<dbReference type="ExpressionAtlas" id="Q0J705">
    <property type="expression patterns" value="baseline and differential"/>
</dbReference>
<dbReference type="GO" id="GO:0005829">
    <property type="term" value="C:cytosol"/>
    <property type="evidence" value="ECO:0000318"/>
    <property type="project" value="GO_Central"/>
</dbReference>
<dbReference type="GO" id="GO:0005789">
    <property type="term" value="C:endoplasmic reticulum membrane"/>
    <property type="evidence" value="ECO:0000314"/>
    <property type="project" value="UniProtKB"/>
</dbReference>
<dbReference type="GO" id="GO:0050660">
    <property type="term" value="F:flavin adenine dinucleotide binding"/>
    <property type="evidence" value="ECO:0000318"/>
    <property type="project" value="GO_Central"/>
</dbReference>
<dbReference type="GO" id="GO:0010181">
    <property type="term" value="F:FMN binding"/>
    <property type="evidence" value="ECO:0000318"/>
    <property type="project" value="GO_Central"/>
</dbReference>
<dbReference type="GO" id="GO:0050661">
    <property type="term" value="F:NADP binding"/>
    <property type="evidence" value="ECO:0007669"/>
    <property type="project" value="UniProtKB-UniRule"/>
</dbReference>
<dbReference type="GO" id="GO:0003958">
    <property type="term" value="F:NADPH-hemoprotein reductase activity"/>
    <property type="evidence" value="ECO:0000314"/>
    <property type="project" value="UniProtKB"/>
</dbReference>
<dbReference type="CDD" id="cd06204">
    <property type="entry name" value="CYPOR"/>
    <property type="match status" value="1"/>
</dbReference>
<dbReference type="FunFam" id="1.20.990.10:FF:000003">
    <property type="entry name" value="NADPH--cytochrome P450 reductase"/>
    <property type="match status" value="1"/>
</dbReference>
<dbReference type="FunFam" id="3.40.50.360:FF:000023">
    <property type="entry name" value="NADPH--cytochrome P450 reductase"/>
    <property type="match status" value="1"/>
</dbReference>
<dbReference type="FunFam" id="3.40.50.80:FF:000001">
    <property type="entry name" value="NADPH--cytochrome P450 reductase 1"/>
    <property type="match status" value="1"/>
</dbReference>
<dbReference type="Gene3D" id="3.40.50.360">
    <property type="match status" value="1"/>
</dbReference>
<dbReference type="Gene3D" id="1.20.990.10">
    <property type="entry name" value="NADPH-cytochrome p450 Reductase, Chain A, domain 3"/>
    <property type="match status" value="1"/>
</dbReference>
<dbReference type="Gene3D" id="3.40.50.80">
    <property type="entry name" value="Nucleotide-binding domain of ferredoxin-NADP reductase (FNR) module"/>
    <property type="match status" value="1"/>
</dbReference>
<dbReference type="Gene3D" id="2.40.30.10">
    <property type="entry name" value="Translation factors"/>
    <property type="match status" value="1"/>
</dbReference>
<dbReference type="HAMAP" id="MF_03212">
    <property type="entry name" value="NCPR"/>
    <property type="match status" value="1"/>
</dbReference>
<dbReference type="InterPro" id="IPR003097">
    <property type="entry name" value="CysJ-like_FAD-binding"/>
</dbReference>
<dbReference type="InterPro" id="IPR017927">
    <property type="entry name" value="FAD-bd_FR_type"/>
</dbReference>
<dbReference type="InterPro" id="IPR001094">
    <property type="entry name" value="Flavdoxin-like"/>
</dbReference>
<dbReference type="InterPro" id="IPR008254">
    <property type="entry name" value="Flavodoxin/NO_synth"/>
</dbReference>
<dbReference type="InterPro" id="IPR001709">
    <property type="entry name" value="Flavoprot_Pyr_Nucl_cyt_Rdtase"/>
</dbReference>
<dbReference type="InterPro" id="IPR029039">
    <property type="entry name" value="Flavoprotein-like_sf"/>
</dbReference>
<dbReference type="InterPro" id="IPR039261">
    <property type="entry name" value="FNR_nucleotide-bd"/>
</dbReference>
<dbReference type="InterPro" id="IPR023173">
    <property type="entry name" value="NADPH_Cyt_P450_Rdtase_alpha"/>
</dbReference>
<dbReference type="InterPro" id="IPR001433">
    <property type="entry name" value="OxRdtase_FAD/NAD-bd"/>
</dbReference>
<dbReference type="InterPro" id="IPR023208">
    <property type="entry name" value="P450R"/>
</dbReference>
<dbReference type="InterPro" id="IPR017938">
    <property type="entry name" value="Riboflavin_synthase-like_b-brl"/>
</dbReference>
<dbReference type="PANTHER" id="PTHR19384:SF126">
    <property type="entry name" value="NADPH--CYTOCHROME P450 REDUCTASE 2"/>
    <property type="match status" value="1"/>
</dbReference>
<dbReference type="PANTHER" id="PTHR19384">
    <property type="entry name" value="NITRIC OXIDE SYNTHASE-RELATED"/>
    <property type="match status" value="1"/>
</dbReference>
<dbReference type="Pfam" id="PF00667">
    <property type="entry name" value="FAD_binding_1"/>
    <property type="match status" value="1"/>
</dbReference>
<dbReference type="Pfam" id="PF00258">
    <property type="entry name" value="Flavodoxin_1"/>
    <property type="match status" value="1"/>
</dbReference>
<dbReference type="Pfam" id="PF00175">
    <property type="entry name" value="NAD_binding_1"/>
    <property type="match status" value="1"/>
</dbReference>
<dbReference type="PIRSF" id="PIRSF000208">
    <property type="entry name" value="P450R"/>
    <property type="match status" value="1"/>
</dbReference>
<dbReference type="PRINTS" id="PR00369">
    <property type="entry name" value="FLAVODOXIN"/>
</dbReference>
<dbReference type="PRINTS" id="PR00371">
    <property type="entry name" value="FPNCR"/>
</dbReference>
<dbReference type="SUPFAM" id="SSF52343">
    <property type="entry name" value="Ferredoxin reductase-like, C-terminal NADP-linked domain"/>
    <property type="match status" value="1"/>
</dbReference>
<dbReference type="SUPFAM" id="SSF52218">
    <property type="entry name" value="Flavoproteins"/>
    <property type="match status" value="1"/>
</dbReference>
<dbReference type="SUPFAM" id="SSF63380">
    <property type="entry name" value="Riboflavin synthase domain-like"/>
    <property type="match status" value="1"/>
</dbReference>
<dbReference type="PROSITE" id="PS51384">
    <property type="entry name" value="FAD_FR"/>
    <property type="match status" value="1"/>
</dbReference>
<dbReference type="PROSITE" id="PS50902">
    <property type="entry name" value="FLAVODOXIN_LIKE"/>
    <property type="match status" value="1"/>
</dbReference>
<proteinExistence type="evidence at protein level"/>
<evidence type="ECO:0000255" key="1">
    <source>
        <dbReference type="HAMAP-Rule" id="MF_03212"/>
    </source>
</evidence>
<evidence type="ECO:0000269" key="2">
    <source>
    </source>
</evidence>
<evidence type="ECO:0000303" key="3">
    <source>
    </source>
</evidence>
<evidence type="ECO:0000305" key="4"/>
<evidence type="ECO:0000312" key="5">
    <source>
        <dbReference type="EMBL" id="BAD05443.1"/>
    </source>
</evidence>
<evidence type="ECO:0000312" key="6">
    <source>
        <dbReference type="EMBL" id="BAD05639.1"/>
    </source>
</evidence>
<evidence type="ECO:0000312" key="7">
    <source>
        <dbReference type="EMBL" id="BAT04511.1"/>
    </source>
</evidence>
<keyword id="KW-0256">Endoplasmic reticulum</keyword>
<keyword id="KW-0274">FAD</keyword>
<keyword id="KW-0285">Flavoprotein</keyword>
<keyword id="KW-0288">FMN</keyword>
<keyword id="KW-0472">Membrane</keyword>
<keyword id="KW-0521">NADP</keyword>
<keyword id="KW-0560">Oxidoreductase</keyword>
<keyword id="KW-1185">Reference proteome</keyword>
<keyword id="KW-0812">Transmembrane</keyword>
<keyword id="KW-1133">Transmembrane helix</keyword>
<accession>Q0J705</accession>
<accession>A0A0P0XE14</accession>
<accession>Q6Z0U4</accession>
<name>NCPR2_ORYSJ</name>
<comment type="function">
    <text evidence="1 2">This enzyme is required for electron transfer from NADP to cytochrome P450 in microsomes (By similarity) (PubMed:23053415). It can also provide electron transfer to heme oxygenase and cytochrome B5 (By similarity). Can reduce cytochrome c in vitro (PubMed:23053415).</text>
</comment>
<comment type="catalytic activity">
    <reaction evidence="1 2">
        <text>2 oxidized [cytochrome P450] + NADPH = 2 reduced [cytochrome P450] + NADP(+) + H(+)</text>
        <dbReference type="Rhea" id="RHEA:24040"/>
        <dbReference type="Rhea" id="RHEA-COMP:14627"/>
        <dbReference type="Rhea" id="RHEA-COMP:14628"/>
        <dbReference type="ChEBI" id="CHEBI:15378"/>
        <dbReference type="ChEBI" id="CHEBI:55376"/>
        <dbReference type="ChEBI" id="CHEBI:57783"/>
        <dbReference type="ChEBI" id="CHEBI:58349"/>
        <dbReference type="ChEBI" id="CHEBI:60344"/>
        <dbReference type="EC" id="1.6.2.4"/>
    </reaction>
    <physiologicalReaction direction="left-to-right" evidence="2">
        <dbReference type="Rhea" id="RHEA:24041"/>
    </physiologicalReaction>
</comment>
<comment type="cofactor">
    <cofactor evidence="1">
        <name>FAD</name>
        <dbReference type="ChEBI" id="CHEBI:57692"/>
    </cofactor>
    <text evidence="1">Binds 1 FAD per monomer.</text>
</comment>
<comment type="cofactor">
    <cofactor evidence="1">
        <name>FMN</name>
        <dbReference type="ChEBI" id="CHEBI:58210"/>
    </cofactor>
    <text evidence="1">Binds 1 FMN per monomer.</text>
</comment>
<comment type="biophysicochemical properties">
    <kinetics>
        <KM evidence="2">0.2 uM for cytochrome c</KM>
        <Vmax evidence="2">6.47 umol/min/mg enzyme with cytochrome c as substrate</Vmax>
    </kinetics>
</comment>
<comment type="subcellular location">
    <subcellularLocation>
        <location evidence="1 2">Endoplasmic reticulum membrane</location>
        <topology evidence="1">Single-pass membrane protein</topology>
        <orientation evidence="1">Cytoplasmic side</orientation>
    </subcellularLocation>
</comment>
<comment type="induction">
    <text evidence="2">Induced by methyl viologen, acifluorfen and cadmium.</text>
</comment>
<comment type="similarity">
    <text evidence="1">Belongs to the NADPH--cytochrome P450 reductase family.</text>
</comment>
<comment type="similarity">
    <text evidence="1">In the C-terminal section; belongs to the flavoprotein pyridine nucleotide cytochrome reductase family.</text>
</comment>
<comment type="similarity">
    <text evidence="1">In the N-terminal section; belongs to the flavodoxin family.</text>
</comment>
<comment type="sequence caution" evidence="4">
    <conflict type="erroneous gene model prediction">
        <sequence resource="EMBL-CDS" id="BAD05443"/>
    </conflict>
</comment>
<comment type="sequence caution" evidence="4">
    <conflict type="erroneous gene model prediction">
        <sequence resource="EMBL-CDS" id="BAD05639"/>
    </conflict>
</comment>
<comment type="sequence caution" evidence="4">
    <conflict type="erroneous initiation">
        <sequence resource="EMBL-CDS" id="BAF23260"/>
    </conflict>
    <text>Truncated N-terminus.</text>
</comment>
<comment type="sequence caution" evidence="4">
    <conflict type="erroneous initiation">
        <sequence resource="EMBL-CDS" id="BAT04511"/>
    </conflict>
    <text>Truncated N-terminus.</text>
</comment>
<protein>
    <recommendedName>
        <fullName evidence="1 3">NADPH--cytochrome P450 reductase 2</fullName>
        <shortName evidence="1">CPR</shortName>
        <shortName evidence="3">OsCPR2</shortName>
        <shortName evidence="1">P450R</shortName>
        <ecNumber evidence="1 2">1.6.2.4</ecNumber>
    </recommendedName>
</protein>
<sequence length="719" mass="78690">MESSAGPMELVAALLRGLTPRAEQLLQLSSGGGEAAAGGAAEARAAVATVAAALLGCAFLVLWRRVSAGRKRKREEAERSAAAVAGVGKGGKNASAAAGEEAGGADGRKRVTVFFGTQTGTAEGFAKALAEEAKSRYDKAIFKVVDLDEYAMEDEEYEERLKKEKISLFFVATYGDGEPTDNAARFYKWFTEGNERGVWLNDFQYAIFGLGNRQYEHFNKVAKVVDELLVEQGGKRLVPVGLGDDDQCIEDDFNAWKETLWPELDQLLRDENDVSTGTTYTAAIPEYRVEFVKPDEAAHLERNFSLANGYAVHDAQHPCRANVAVRRELHTPASDRSCTHLEFDIAGTGLTYETGDHVGVYTENCLEVVEEAERLLGYSPEAFFTIHADKEDGTPLGGGSLAPPFPSPITVRNALARYADLLNSPKKSALVALATYASDSTEADRLRFLASPAGKDEYAQWVVASQRSLLEVMAEFPSAKPPLGVFFAAVAPRLQPRYYSISSSPSMAPTRIHVTCALVHEKTPAGRVHKGVCSTWIKNAIPSEETKDCSWAPVFVRQSNFKLPADPSVPVIMIGPGTGLAPFRGFLQERLSQKQSGAELGRSVFFFGCRNSKMDFIYEDELNTFLEEGALSELVLAFSREGPTKEYVQHKMSQKASEIWDMISQGGYIYVCGDAKGMARDVHRVLHTIVQEQGSLDSSKAESFVKSLQTEGRYLRDVW</sequence>
<feature type="chain" id="PRO_0000451429" description="NADPH--cytochrome P450 reductase 2">
    <location>
        <begin position="1"/>
        <end position="719"/>
    </location>
</feature>
<feature type="topological domain" description="Lumenal" evidence="1">
    <location>
        <begin position="1"/>
        <end position="42"/>
    </location>
</feature>
<feature type="transmembrane region" description="Helical" evidence="1">
    <location>
        <begin position="43"/>
        <end position="63"/>
    </location>
</feature>
<feature type="topological domain" description="Cytoplasmic" evidence="1">
    <location>
        <begin position="64"/>
        <end position="719"/>
    </location>
</feature>
<feature type="domain" description="Flavodoxin-like" evidence="1">
    <location>
        <begin position="111"/>
        <end position="261"/>
    </location>
</feature>
<feature type="domain" description="FAD-binding FR-type" evidence="1">
    <location>
        <begin position="316"/>
        <end position="564"/>
    </location>
</feature>
<feature type="binding site" evidence="1">
    <location>
        <begin position="117"/>
        <end position="122"/>
    </location>
    <ligand>
        <name>FMN</name>
        <dbReference type="ChEBI" id="CHEBI:58210"/>
    </ligand>
</feature>
<feature type="binding site" evidence="1">
    <location>
        <begin position="172"/>
        <end position="175"/>
    </location>
    <ligand>
        <name>FMN</name>
        <dbReference type="ChEBI" id="CHEBI:58210"/>
    </ligand>
</feature>
<feature type="binding site" evidence="1">
    <location>
        <begin position="210"/>
        <end position="219"/>
    </location>
    <ligand>
        <name>FMN</name>
        <dbReference type="ChEBI" id="CHEBI:58210"/>
    </ligand>
</feature>
<feature type="binding site" evidence="1">
    <location>
        <position position="245"/>
    </location>
    <ligand>
        <name>FMN</name>
        <dbReference type="ChEBI" id="CHEBI:58210"/>
    </ligand>
</feature>
<feature type="binding site" evidence="1">
    <location>
        <position position="336"/>
    </location>
    <ligand>
        <name>NADP(+)</name>
        <dbReference type="ChEBI" id="CHEBI:58349"/>
    </ligand>
</feature>
<feature type="binding site" evidence="1">
    <location>
        <begin position="497"/>
        <end position="500"/>
    </location>
    <ligand>
        <name>FAD</name>
        <dbReference type="ChEBI" id="CHEBI:57692"/>
    </ligand>
</feature>
<feature type="binding site" evidence="1">
    <location>
        <begin position="515"/>
        <end position="517"/>
    </location>
    <ligand>
        <name>FAD</name>
        <dbReference type="ChEBI" id="CHEBI:57692"/>
    </ligand>
</feature>
<feature type="binding site" evidence="1">
    <location>
        <begin position="531"/>
        <end position="534"/>
    </location>
    <ligand>
        <name>FAD</name>
        <dbReference type="ChEBI" id="CHEBI:57692"/>
    </ligand>
</feature>
<feature type="binding site" evidence="1">
    <location>
        <position position="578"/>
    </location>
    <ligand>
        <name>NADP(+)</name>
        <dbReference type="ChEBI" id="CHEBI:58349"/>
    </ligand>
</feature>
<feature type="binding site" evidence="1">
    <location>
        <begin position="639"/>
        <end position="640"/>
    </location>
    <ligand>
        <name>NADP(+)</name>
        <dbReference type="ChEBI" id="CHEBI:58349"/>
    </ligand>
</feature>
<feature type="binding site" evidence="1">
    <location>
        <begin position="645"/>
        <end position="649"/>
    </location>
    <ligand>
        <name>NADP(+)</name>
        <dbReference type="ChEBI" id="CHEBI:58349"/>
    </ligand>
</feature>
<feature type="binding site" evidence="1">
    <location>
        <position position="681"/>
    </location>
    <ligand>
        <name>NADP(+)</name>
        <dbReference type="ChEBI" id="CHEBI:58349"/>
    </ligand>
</feature>
<feature type="binding site" evidence="1">
    <location>
        <position position="719"/>
    </location>
    <ligand>
        <name>FAD</name>
        <dbReference type="ChEBI" id="CHEBI:57692"/>
    </ligand>
</feature>
<gene>
    <name evidence="3" type="primary">CPR2</name>
    <name evidence="7" type="ordered locus">Os08g0243500</name>
    <name evidence="4" type="ordered locus">LOC_Os08g14570</name>
    <name evidence="6" type="ORF">OSJNBb0070J06.25</name>
    <name evidence="5" type="ORF">P0437G01.10</name>
</gene>
<organism>
    <name type="scientific">Oryza sativa subsp. japonica</name>
    <name type="common">Rice</name>
    <dbReference type="NCBI Taxonomy" id="39947"/>
    <lineage>
        <taxon>Eukaryota</taxon>
        <taxon>Viridiplantae</taxon>
        <taxon>Streptophyta</taxon>
        <taxon>Embryophyta</taxon>
        <taxon>Tracheophyta</taxon>
        <taxon>Spermatophyta</taxon>
        <taxon>Magnoliopsida</taxon>
        <taxon>Liliopsida</taxon>
        <taxon>Poales</taxon>
        <taxon>Poaceae</taxon>
        <taxon>BOP clade</taxon>
        <taxon>Oryzoideae</taxon>
        <taxon>Oryzeae</taxon>
        <taxon>Oryzinae</taxon>
        <taxon>Oryza</taxon>
        <taxon>Oryza sativa</taxon>
    </lineage>
</organism>